<gene>
    <name evidence="1" type="primary">murJ</name>
    <name type="synonym">mviN</name>
    <name type="ordered locus">R00397</name>
    <name type="ORF">SMc01123</name>
</gene>
<dbReference type="EMBL" id="AL591688">
    <property type="protein sequence ID" value="CAC41834.1"/>
    <property type="molecule type" value="Genomic_DNA"/>
</dbReference>
<dbReference type="EMBL" id="AF227730">
    <property type="protein sequence ID" value="AAF37853.2"/>
    <property type="molecule type" value="Genomic_DNA"/>
</dbReference>
<dbReference type="RefSeq" id="NP_384503.1">
    <property type="nucleotide sequence ID" value="NC_003047.1"/>
</dbReference>
<dbReference type="RefSeq" id="WP_010968549.1">
    <property type="nucleotide sequence ID" value="NC_003047.1"/>
</dbReference>
<dbReference type="SMR" id="P56882"/>
<dbReference type="EnsemblBacteria" id="CAC41834">
    <property type="protein sequence ID" value="CAC41834"/>
    <property type="gene ID" value="SMc01123"/>
</dbReference>
<dbReference type="KEGG" id="sme:SMc01123"/>
<dbReference type="PATRIC" id="fig|266834.11.peg.1770"/>
<dbReference type="eggNOG" id="COG0728">
    <property type="taxonomic scope" value="Bacteria"/>
</dbReference>
<dbReference type="HOGENOM" id="CLU_006797_5_0_5"/>
<dbReference type="OrthoDB" id="9816572at2"/>
<dbReference type="UniPathway" id="UPA00219"/>
<dbReference type="Proteomes" id="UP000001976">
    <property type="component" value="Chromosome"/>
</dbReference>
<dbReference type="GO" id="GO:0005886">
    <property type="term" value="C:plasma membrane"/>
    <property type="evidence" value="ECO:0007669"/>
    <property type="project" value="UniProtKB-SubCell"/>
</dbReference>
<dbReference type="GO" id="GO:0015648">
    <property type="term" value="F:lipid-linked peptidoglycan transporter activity"/>
    <property type="evidence" value="ECO:0007669"/>
    <property type="project" value="UniProtKB-UniRule"/>
</dbReference>
<dbReference type="GO" id="GO:0071555">
    <property type="term" value="P:cell wall organization"/>
    <property type="evidence" value="ECO:0007669"/>
    <property type="project" value="UniProtKB-KW"/>
</dbReference>
<dbReference type="GO" id="GO:0034204">
    <property type="term" value="P:lipid translocation"/>
    <property type="evidence" value="ECO:0007669"/>
    <property type="project" value="TreeGrafter"/>
</dbReference>
<dbReference type="GO" id="GO:0009252">
    <property type="term" value="P:peptidoglycan biosynthetic process"/>
    <property type="evidence" value="ECO:0007669"/>
    <property type="project" value="UniProtKB-UniRule"/>
</dbReference>
<dbReference type="GO" id="GO:0008360">
    <property type="term" value="P:regulation of cell shape"/>
    <property type="evidence" value="ECO:0007669"/>
    <property type="project" value="UniProtKB-KW"/>
</dbReference>
<dbReference type="CDD" id="cd13123">
    <property type="entry name" value="MATE_MurJ_like"/>
    <property type="match status" value="1"/>
</dbReference>
<dbReference type="HAMAP" id="MF_02078">
    <property type="entry name" value="MurJ_MviN"/>
    <property type="match status" value="1"/>
</dbReference>
<dbReference type="InterPro" id="IPR051050">
    <property type="entry name" value="Lipid_II_flippase_MurJ/MviN"/>
</dbReference>
<dbReference type="InterPro" id="IPR004268">
    <property type="entry name" value="MurJ"/>
</dbReference>
<dbReference type="NCBIfam" id="TIGR01695">
    <property type="entry name" value="murJ_mviN"/>
    <property type="match status" value="1"/>
</dbReference>
<dbReference type="PANTHER" id="PTHR47019">
    <property type="entry name" value="LIPID II FLIPPASE MURJ"/>
    <property type="match status" value="1"/>
</dbReference>
<dbReference type="PANTHER" id="PTHR47019:SF1">
    <property type="entry name" value="LIPID II FLIPPASE MURJ"/>
    <property type="match status" value="1"/>
</dbReference>
<dbReference type="Pfam" id="PF03023">
    <property type="entry name" value="MurJ"/>
    <property type="match status" value="1"/>
</dbReference>
<dbReference type="PIRSF" id="PIRSF002869">
    <property type="entry name" value="MviN"/>
    <property type="match status" value="1"/>
</dbReference>
<dbReference type="PRINTS" id="PR01806">
    <property type="entry name" value="VIRFACTRMVIN"/>
</dbReference>
<protein>
    <recommendedName>
        <fullName evidence="1">Probable lipid II flippase MurJ</fullName>
    </recommendedName>
</protein>
<name>MURJ_RHIME</name>
<accession>P56882</accession>
<keyword id="KW-0997">Cell inner membrane</keyword>
<keyword id="KW-1003">Cell membrane</keyword>
<keyword id="KW-0133">Cell shape</keyword>
<keyword id="KW-0961">Cell wall biogenesis/degradation</keyword>
<keyword id="KW-0472">Membrane</keyword>
<keyword id="KW-0573">Peptidoglycan synthesis</keyword>
<keyword id="KW-1185">Reference proteome</keyword>
<keyword id="KW-0812">Transmembrane</keyword>
<keyword id="KW-1133">Transmembrane helix</keyword>
<keyword id="KW-0813">Transport</keyword>
<reference key="1">
    <citation type="journal article" date="2001" name="Proc. Natl. Acad. Sci. U.S.A.">
        <title>Analysis of the chromosome sequence of the legume symbiont Sinorhizobium meliloti strain 1021.</title>
        <authorList>
            <person name="Capela D."/>
            <person name="Barloy-Hubler F."/>
            <person name="Gouzy J."/>
            <person name="Bothe G."/>
            <person name="Ampe F."/>
            <person name="Batut J."/>
            <person name="Boistard P."/>
            <person name="Becker A."/>
            <person name="Boutry M."/>
            <person name="Cadieu E."/>
            <person name="Dreano S."/>
            <person name="Gloux S."/>
            <person name="Godrie T."/>
            <person name="Goffeau A."/>
            <person name="Kahn D."/>
            <person name="Kiss E."/>
            <person name="Lelaure V."/>
            <person name="Masuy D."/>
            <person name="Pohl T."/>
            <person name="Portetelle D."/>
            <person name="Puehler A."/>
            <person name="Purnelle B."/>
            <person name="Ramsperger U."/>
            <person name="Renard C."/>
            <person name="Thebault P."/>
            <person name="Vandenbol M."/>
            <person name="Weidner S."/>
            <person name="Galibert F."/>
        </authorList>
    </citation>
    <scope>NUCLEOTIDE SEQUENCE [LARGE SCALE GENOMIC DNA]</scope>
    <source>
        <strain>1021</strain>
    </source>
</reference>
<reference key="2">
    <citation type="journal article" date="2001" name="Science">
        <title>The composite genome of the legume symbiont Sinorhizobium meliloti.</title>
        <authorList>
            <person name="Galibert F."/>
            <person name="Finan T.M."/>
            <person name="Long S.R."/>
            <person name="Puehler A."/>
            <person name="Abola P."/>
            <person name="Ampe F."/>
            <person name="Barloy-Hubler F."/>
            <person name="Barnett M.J."/>
            <person name="Becker A."/>
            <person name="Boistard P."/>
            <person name="Bothe G."/>
            <person name="Boutry M."/>
            <person name="Bowser L."/>
            <person name="Buhrmester J."/>
            <person name="Cadieu E."/>
            <person name="Capela D."/>
            <person name="Chain P."/>
            <person name="Cowie A."/>
            <person name="Davis R.W."/>
            <person name="Dreano S."/>
            <person name="Federspiel N.A."/>
            <person name="Fisher R.F."/>
            <person name="Gloux S."/>
            <person name="Godrie T."/>
            <person name="Goffeau A."/>
            <person name="Golding B."/>
            <person name="Gouzy J."/>
            <person name="Gurjal M."/>
            <person name="Hernandez-Lucas I."/>
            <person name="Hong A."/>
            <person name="Huizar L."/>
            <person name="Hyman R.W."/>
            <person name="Jones T."/>
            <person name="Kahn D."/>
            <person name="Kahn M.L."/>
            <person name="Kalman S."/>
            <person name="Keating D.H."/>
            <person name="Kiss E."/>
            <person name="Komp C."/>
            <person name="Lelaure V."/>
            <person name="Masuy D."/>
            <person name="Palm C."/>
            <person name="Peck M.C."/>
            <person name="Pohl T.M."/>
            <person name="Portetelle D."/>
            <person name="Purnelle B."/>
            <person name="Ramsperger U."/>
            <person name="Surzycki R."/>
            <person name="Thebault P."/>
            <person name="Vandenbol M."/>
            <person name="Vorhoelter F.J."/>
            <person name="Weidner S."/>
            <person name="Wells D.H."/>
            <person name="Wong K."/>
            <person name="Yeh K.-C."/>
            <person name="Batut J."/>
        </authorList>
    </citation>
    <scope>NUCLEOTIDE SEQUENCE [LARGE SCALE GENOMIC DNA]</scope>
    <source>
        <strain>1021</strain>
    </source>
</reference>
<reference key="3">
    <citation type="journal article" date="2001" name="J. Bacteriol.">
        <title>glnD and mviN are genes of an essential operon in Sinorhizobium meliloti.</title>
        <authorList>
            <person name="Rudnick P.A."/>
            <person name="Arcondeguy T."/>
            <person name="Kennedy C.K."/>
            <person name="Kahn D."/>
        </authorList>
    </citation>
    <scope>NUCLEOTIDE SEQUENCE [GENOMIC DNA] OF 1-310</scope>
</reference>
<comment type="function">
    <text evidence="1">Involved in peptidoglycan biosynthesis. Transports lipid-linked peptidoglycan precursors from the inner to the outer leaflet of the cytoplasmic membrane.</text>
</comment>
<comment type="pathway">
    <text evidence="1">Cell wall biogenesis; peptidoglycan biosynthesis.</text>
</comment>
<comment type="subcellular location">
    <subcellularLocation>
        <location evidence="1">Cell inner membrane</location>
        <topology evidence="1">Multi-pass membrane protein</topology>
    </subcellularLocation>
</comment>
<comment type="similarity">
    <text evidence="1">Belongs to the MurJ/MviN family.</text>
</comment>
<feature type="chain" id="PRO_0000182011" description="Probable lipid II flippase MurJ">
    <location>
        <begin position="1"/>
        <end position="535"/>
    </location>
</feature>
<feature type="transmembrane region" description="Helical" evidence="1">
    <location>
        <begin position="90"/>
        <end position="110"/>
    </location>
</feature>
<feature type="transmembrane region" description="Helical" evidence="1">
    <location>
        <begin position="131"/>
        <end position="151"/>
    </location>
</feature>
<feature type="transmembrane region" description="Helical" evidence="1">
    <location>
        <begin position="159"/>
        <end position="179"/>
    </location>
</feature>
<feature type="transmembrane region" description="Helical" evidence="1">
    <location>
        <begin position="192"/>
        <end position="212"/>
    </location>
</feature>
<feature type="transmembrane region" description="Helical" evidence="1">
    <location>
        <begin position="233"/>
        <end position="253"/>
    </location>
</feature>
<feature type="transmembrane region" description="Helical" evidence="1">
    <location>
        <begin position="274"/>
        <end position="294"/>
    </location>
</feature>
<feature type="transmembrane region" description="Helical" evidence="1">
    <location>
        <begin position="316"/>
        <end position="336"/>
    </location>
</feature>
<feature type="transmembrane region" description="Helical" evidence="1">
    <location>
        <begin position="350"/>
        <end position="370"/>
    </location>
</feature>
<feature type="transmembrane region" description="Helical" evidence="1">
    <location>
        <begin position="388"/>
        <end position="408"/>
    </location>
</feature>
<feature type="transmembrane region" description="Helical" evidence="1">
    <location>
        <begin position="413"/>
        <end position="433"/>
    </location>
</feature>
<feature type="transmembrane region" description="Helical" evidence="1">
    <location>
        <begin position="451"/>
        <end position="471"/>
    </location>
</feature>
<feature type="transmembrane region" description="Helical" evidence="1">
    <location>
        <begin position="484"/>
        <end position="504"/>
    </location>
</feature>
<proteinExistence type="inferred from homology"/>
<evidence type="ECO:0000255" key="1">
    <source>
        <dbReference type="HAMAP-Rule" id="MF_02078"/>
    </source>
</evidence>
<sequence length="535" mass="56809">MSLVKKFATVGGATLGSRLFGFIRETFMAAALGTGPVADAFNTAFRLPNTFRRLFAEGAFNSAFVPLFAKEIEAHGMDGARRFSEEVFGVLFTVLLLLTIAMELSMPFIVGQLIAPGFADDPAKFTSTVTFATIMFPYLACMSLAAMMAGMLNSLHRYFAAAIAPVFLNFILIAVLAYAWYSGQDAVAVGYDLSWGVLAAGLVQLAIVWVAVRNAGIRIGFRRPRLTPNVKRLLVLALPAAITGGITQINLLINTNIASAKEGAVSSLVYADRIYQLPLGVVGIAVATVLLPELARALRGGNLNEAANLQNRSVEFTLFLTLPAAAALLVMSEPIVRLLFERGQFSPESTVVVGHILAIYGLGLPAFVLIKAFIPGFFAREDTRTPMIFAGISVAVNVSLALTLFPSLAASGIATAEIVAGWVNALLLFATLVWRGHWGRDIPLLTRIPRLVIAAAIMAAALYVAVDWLAFPLSSAAPLSTRALTLCGLIAAAMAIYFAVAFGIGGASLSMIRRSVKRGASASSVERASEGADRQ</sequence>
<organism>
    <name type="scientific">Rhizobium meliloti (strain 1021)</name>
    <name type="common">Ensifer meliloti</name>
    <name type="synonym">Sinorhizobium meliloti</name>
    <dbReference type="NCBI Taxonomy" id="266834"/>
    <lineage>
        <taxon>Bacteria</taxon>
        <taxon>Pseudomonadati</taxon>
        <taxon>Pseudomonadota</taxon>
        <taxon>Alphaproteobacteria</taxon>
        <taxon>Hyphomicrobiales</taxon>
        <taxon>Rhizobiaceae</taxon>
        <taxon>Sinorhizobium/Ensifer group</taxon>
        <taxon>Sinorhizobium</taxon>
    </lineage>
</organism>